<keyword id="KW-0002">3D-structure</keyword>
<keyword id="KW-0687">Ribonucleoprotein</keyword>
<keyword id="KW-0689">Ribosomal protein</keyword>
<proteinExistence type="evidence at protein level"/>
<accession>P66174</accession>
<accession>Q99S29</accession>
<protein>
    <recommendedName>
        <fullName evidence="1">Large ribosomal subunit protein uL29</fullName>
    </recommendedName>
    <alternativeName>
        <fullName evidence="2">50S ribosomal protein L29</fullName>
    </alternativeName>
</protein>
<organism>
    <name type="scientific">Staphylococcus aureus (strain MW2)</name>
    <dbReference type="NCBI Taxonomy" id="196620"/>
    <lineage>
        <taxon>Bacteria</taxon>
        <taxon>Bacillati</taxon>
        <taxon>Bacillota</taxon>
        <taxon>Bacilli</taxon>
        <taxon>Bacillales</taxon>
        <taxon>Staphylococcaceae</taxon>
        <taxon>Staphylococcus</taxon>
    </lineage>
</organism>
<sequence length="69" mass="8090">MKAKEIRDLTTSEIEEQIKSSKEELFNLRFQLATGQLEETARIRTVRKTIARLKTVAREREIEQSKANQ</sequence>
<evidence type="ECO:0000255" key="1">
    <source>
        <dbReference type="HAMAP-Rule" id="MF_00374"/>
    </source>
</evidence>
<evidence type="ECO:0000305" key="2"/>
<comment type="similarity">
    <text evidence="1">Belongs to the universal ribosomal protein uL29 family.</text>
</comment>
<comment type="sequence caution" evidence="2">
    <conflict type="erroneous initiation">
        <sequence resource="EMBL-CDS" id="BAB96026"/>
    </conflict>
</comment>
<gene>
    <name evidence="1" type="primary">rpmC</name>
    <name type="ordered locus">MW2161</name>
</gene>
<feature type="chain" id="PRO_0000130460" description="Large ribosomal subunit protein uL29">
    <location>
        <begin position="1"/>
        <end position="69"/>
    </location>
</feature>
<reference key="1">
    <citation type="journal article" date="2002" name="Lancet">
        <title>Genome and virulence determinants of high virulence community-acquired MRSA.</title>
        <authorList>
            <person name="Baba T."/>
            <person name="Takeuchi F."/>
            <person name="Kuroda M."/>
            <person name="Yuzawa H."/>
            <person name="Aoki K."/>
            <person name="Oguchi A."/>
            <person name="Nagai Y."/>
            <person name="Iwama N."/>
            <person name="Asano K."/>
            <person name="Naimi T."/>
            <person name="Kuroda H."/>
            <person name="Cui L."/>
            <person name="Yamamoto K."/>
            <person name="Hiramatsu K."/>
        </authorList>
    </citation>
    <scope>NUCLEOTIDE SEQUENCE [LARGE SCALE GENOMIC DNA]</scope>
    <source>
        <strain>MW2</strain>
    </source>
</reference>
<dbReference type="EMBL" id="BA000033">
    <property type="protein sequence ID" value="BAB96026.1"/>
    <property type="status" value="ALT_INIT"/>
    <property type="molecule type" value="Genomic_DNA"/>
</dbReference>
<dbReference type="RefSeq" id="WP_000644737.1">
    <property type="nucleotide sequence ID" value="NC_003923.1"/>
</dbReference>
<dbReference type="PDB" id="8Y36">
    <property type="method" value="EM"/>
    <property type="resolution" value="2.65 A"/>
    <property type="chains" value="W=2-68"/>
</dbReference>
<dbReference type="PDB" id="8Y37">
    <property type="method" value="EM"/>
    <property type="resolution" value="2.53 A"/>
    <property type="chains" value="W=2-68"/>
</dbReference>
<dbReference type="PDB" id="8Y38">
    <property type="method" value="EM"/>
    <property type="resolution" value="2.58 A"/>
    <property type="chains" value="W=2-68"/>
</dbReference>
<dbReference type="PDB" id="8Y39">
    <property type="method" value="EM"/>
    <property type="resolution" value="3.60 A"/>
    <property type="chains" value="W=2-68"/>
</dbReference>
<dbReference type="PDBsum" id="8Y36"/>
<dbReference type="PDBsum" id="8Y37"/>
<dbReference type="PDBsum" id="8Y38"/>
<dbReference type="PDBsum" id="8Y39"/>
<dbReference type="EMDB" id="EMD-38873"/>
<dbReference type="EMDB" id="EMD-38874"/>
<dbReference type="EMDB" id="EMD-38875"/>
<dbReference type="EMDB" id="EMD-38876"/>
<dbReference type="SMR" id="P66174"/>
<dbReference type="GeneID" id="98346554"/>
<dbReference type="KEGG" id="sam:MW2161"/>
<dbReference type="HOGENOM" id="CLU_158491_5_2_9"/>
<dbReference type="GO" id="GO:0022625">
    <property type="term" value="C:cytosolic large ribosomal subunit"/>
    <property type="evidence" value="ECO:0007669"/>
    <property type="project" value="TreeGrafter"/>
</dbReference>
<dbReference type="GO" id="GO:0003735">
    <property type="term" value="F:structural constituent of ribosome"/>
    <property type="evidence" value="ECO:0007669"/>
    <property type="project" value="InterPro"/>
</dbReference>
<dbReference type="GO" id="GO:0006412">
    <property type="term" value="P:translation"/>
    <property type="evidence" value="ECO:0007669"/>
    <property type="project" value="UniProtKB-UniRule"/>
</dbReference>
<dbReference type="CDD" id="cd00427">
    <property type="entry name" value="Ribosomal_L29_HIP"/>
    <property type="match status" value="1"/>
</dbReference>
<dbReference type="FunFam" id="1.10.287.310:FF:000001">
    <property type="entry name" value="50S ribosomal protein L29"/>
    <property type="match status" value="1"/>
</dbReference>
<dbReference type="Gene3D" id="1.10.287.310">
    <property type="match status" value="1"/>
</dbReference>
<dbReference type="HAMAP" id="MF_00374">
    <property type="entry name" value="Ribosomal_uL29"/>
    <property type="match status" value="1"/>
</dbReference>
<dbReference type="InterPro" id="IPR050063">
    <property type="entry name" value="Ribosomal_protein_uL29"/>
</dbReference>
<dbReference type="InterPro" id="IPR001854">
    <property type="entry name" value="Ribosomal_uL29"/>
</dbReference>
<dbReference type="InterPro" id="IPR036049">
    <property type="entry name" value="Ribosomal_uL29_sf"/>
</dbReference>
<dbReference type="NCBIfam" id="TIGR00012">
    <property type="entry name" value="L29"/>
    <property type="match status" value="1"/>
</dbReference>
<dbReference type="PANTHER" id="PTHR10916">
    <property type="entry name" value="60S RIBOSOMAL PROTEIN L35/50S RIBOSOMAL PROTEIN L29"/>
    <property type="match status" value="1"/>
</dbReference>
<dbReference type="PANTHER" id="PTHR10916:SF0">
    <property type="entry name" value="LARGE RIBOSOMAL SUBUNIT PROTEIN UL29C"/>
    <property type="match status" value="1"/>
</dbReference>
<dbReference type="Pfam" id="PF00831">
    <property type="entry name" value="Ribosomal_L29"/>
    <property type="match status" value="1"/>
</dbReference>
<dbReference type="SUPFAM" id="SSF46561">
    <property type="entry name" value="Ribosomal protein L29 (L29p)"/>
    <property type="match status" value="1"/>
</dbReference>
<name>RL29_STAAW</name>